<reference key="1">
    <citation type="journal article" date="2002" name="Mol. Cell. Biol.">
        <title>Functional cooperation between c-Cbl and Src-like adaptor protein 2 in the negative regulation of T-cell receptor signaling.</title>
        <authorList>
            <person name="Loreto M.P."/>
            <person name="Berry D.M."/>
            <person name="McGlade C.J."/>
        </authorList>
    </citation>
    <scope>NUCLEOTIDE SEQUENCE [MRNA] (ISOFORMS 1 AND 2)</scope>
    <scope>ALTERNATIVE INITIATION</scope>
    <scope>CHARACTERIZATION</scope>
    <scope>FUNCTION</scope>
    <scope>MYRISTOYLATION AT GLY-2</scope>
    <scope>PHOSPHORYLATION</scope>
    <scope>INTERACTION WITH ZAP70 AND CBL</scope>
    <scope>MUTAGENESIS OF GLY-2; MET-27 AND ARG-120</scope>
</reference>
<reference key="2">
    <citation type="journal article" date="2002" name="J. Biol. Chem.">
        <title>A novel Src homology 2 domain-containing molecule, Src-like adapter protein-2 (SLAP-2), which negatively regulates T cell receptor signaling.</title>
        <authorList>
            <person name="Pandey A."/>
            <person name="Ibarrola N."/>
            <person name="Kratchmarova I."/>
            <person name="Fernandez M.M."/>
            <person name="Constantinescu S.N."/>
            <person name="Ohara O."/>
            <person name="Sawasdikosol S."/>
            <person name="Lodish H.F."/>
            <person name="Mann M."/>
        </authorList>
    </citation>
    <scope>NUCLEOTIDE SEQUENCE [MRNA] (ISOFORMS 1 AND 2)</scope>
    <scope>FUNCTION</scope>
    <scope>MYRISTOYLATION AT GLY-2</scope>
    <scope>INTERACTION WITH CBL; ZAP70 AND CD3Z</scope>
    <scope>MUTAGENESIS OF GLY-2; PRO-82 AND ARG-120</scope>
</reference>
<reference key="3">
    <citation type="journal article" date="2005" name="Science">
        <title>The transcriptional landscape of the mammalian genome.</title>
        <authorList>
            <person name="Carninci P."/>
            <person name="Kasukawa T."/>
            <person name="Katayama S."/>
            <person name="Gough J."/>
            <person name="Frith M.C."/>
            <person name="Maeda N."/>
            <person name="Oyama R."/>
            <person name="Ravasi T."/>
            <person name="Lenhard B."/>
            <person name="Wells C."/>
            <person name="Kodzius R."/>
            <person name="Shimokawa K."/>
            <person name="Bajic V.B."/>
            <person name="Brenner S.E."/>
            <person name="Batalov S."/>
            <person name="Forrest A.R."/>
            <person name="Zavolan M."/>
            <person name="Davis M.J."/>
            <person name="Wilming L.G."/>
            <person name="Aidinis V."/>
            <person name="Allen J.E."/>
            <person name="Ambesi-Impiombato A."/>
            <person name="Apweiler R."/>
            <person name="Aturaliya R.N."/>
            <person name="Bailey T.L."/>
            <person name="Bansal M."/>
            <person name="Baxter L."/>
            <person name="Beisel K.W."/>
            <person name="Bersano T."/>
            <person name="Bono H."/>
            <person name="Chalk A.M."/>
            <person name="Chiu K.P."/>
            <person name="Choudhary V."/>
            <person name="Christoffels A."/>
            <person name="Clutterbuck D.R."/>
            <person name="Crowe M.L."/>
            <person name="Dalla E."/>
            <person name="Dalrymple B.P."/>
            <person name="de Bono B."/>
            <person name="Della Gatta G."/>
            <person name="di Bernardo D."/>
            <person name="Down T."/>
            <person name="Engstrom P."/>
            <person name="Fagiolini M."/>
            <person name="Faulkner G."/>
            <person name="Fletcher C.F."/>
            <person name="Fukushima T."/>
            <person name="Furuno M."/>
            <person name="Futaki S."/>
            <person name="Gariboldi M."/>
            <person name="Georgii-Hemming P."/>
            <person name="Gingeras T.R."/>
            <person name="Gojobori T."/>
            <person name="Green R.E."/>
            <person name="Gustincich S."/>
            <person name="Harbers M."/>
            <person name="Hayashi Y."/>
            <person name="Hensch T.K."/>
            <person name="Hirokawa N."/>
            <person name="Hill D."/>
            <person name="Huminiecki L."/>
            <person name="Iacono M."/>
            <person name="Ikeo K."/>
            <person name="Iwama A."/>
            <person name="Ishikawa T."/>
            <person name="Jakt M."/>
            <person name="Kanapin A."/>
            <person name="Katoh M."/>
            <person name="Kawasawa Y."/>
            <person name="Kelso J."/>
            <person name="Kitamura H."/>
            <person name="Kitano H."/>
            <person name="Kollias G."/>
            <person name="Krishnan S.P."/>
            <person name="Kruger A."/>
            <person name="Kummerfeld S.K."/>
            <person name="Kurochkin I.V."/>
            <person name="Lareau L.F."/>
            <person name="Lazarevic D."/>
            <person name="Lipovich L."/>
            <person name="Liu J."/>
            <person name="Liuni S."/>
            <person name="McWilliam S."/>
            <person name="Madan Babu M."/>
            <person name="Madera M."/>
            <person name="Marchionni L."/>
            <person name="Matsuda H."/>
            <person name="Matsuzawa S."/>
            <person name="Miki H."/>
            <person name="Mignone F."/>
            <person name="Miyake S."/>
            <person name="Morris K."/>
            <person name="Mottagui-Tabar S."/>
            <person name="Mulder N."/>
            <person name="Nakano N."/>
            <person name="Nakauchi H."/>
            <person name="Ng P."/>
            <person name="Nilsson R."/>
            <person name="Nishiguchi S."/>
            <person name="Nishikawa S."/>
            <person name="Nori F."/>
            <person name="Ohara O."/>
            <person name="Okazaki Y."/>
            <person name="Orlando V."/>
            <person name="Pang K.C."/>
            <person name="Pavan W.J."/>
            <person name="Pavesi G."/>
            <person name="Pesole G."/>
            <person name="Petrovsky N."/>
            <person name="Piazza S."/>
            <person name="Reed J."/>
            <person name="Reid J.F."/>
            <person name="Ring B.Z."/>
            <person name="Ringwald M."/>
            <person name="Rost B."/>
            <person name="Ruan Y."/>
            <person name="Salzberg S.L."/>
            <person name="Sandelin A."/>
            <person name="Schneider C."/>
            <person name="Schoenbach C."/>
            <person name="Sekiguchi K."/>
            <person name="Semple C.A."/>
            <person name="Seno S."/>
            <person name="Sessa L."/>
            <person name="Sheng Y."/>
            <person name="Shibata Y."/>
            <person name="Shimada H."/>
            <person name="Shimada K."/>
            <person name="Silva D."/>
            <person name="Sinclair B."/>
            <person name="Sperling S."/>
            <person name="Stupka E."/>
            <person name="Sugiura K."/>
            <person name="Sultana R."/>
            <person name="Takenaka Y."/>
            <person name="Taki K."/>
            <person name="Tammoja K."/>
            <person name="Tan S.L."/>
            <person name="Tang S."/>
            <person name="Taylor M.S."/>
            <person name="Tegner J."/>
            <person name="Teichmann S.A."/>
            <person name="Ueda H.R."/>
            <person name="van Nimwegen E."/>
            <person name="Verardo R."/>
            <person name="Wei C.L."/>
            <person name="Yagi K."/>
            <person name="Yamanishi H."/>
            <person name="Zabarovsky E."/>
            <person name="Zhu S."/>
            <person name="Zimmer A."/>
            <person name="Hide W."/>
            <person name="Bult C."/>
            <person name="Grimmond S.M."/>
            <person name="Teasdale R.D."/>
            <person name="Liu E.T."/>
            <person name="Brusic V."/>
            <person name="Quackenbush J."/>
            <person name="Wahlestedt C."/>
            <person name="Mattick J.S."/>
            <person name="Hume D.A."/>
            <person name="Kai C."/>
            <person name="Sasaki D."/>
            <person name="Tomaru Y."/>
            <person name="Fukuda S."/>
            <person name="Kanamori-Katayama M."/>
            <person name="Suzuki M."/>
            <person name="Aoki J."/>
            <person name="Arakawa T."/>
            <person name="Iida J."/>
            <person name="Imamura K."/>
            <person name="Itoh M."/>
            <person name="Kato T."/>
            <person name="Kawaji H."/>
            <person name="Kawagashira N."/>
            <person name="Kawashima T."/>
            <person name="Kojima M."/>
            <person name="Kondo S."/>
            <person name="Konno H."/>
            <person name="Nakano K."/>
            <person name="Ninomiya N."/>
            <person name="Nishio T."/>
            <person name="Okada M."/>
            <person name="Plessy C."/>
            <person name="Shibata K."/>
            <person name="Shiraki T."/>
            <person name="Suzuki S."/>
            <person name="Tagami M."/>
            <person name="Waki K."/>
            <person name="Watahiki A."/>
            <person name="Okamura-Oho Y."/>
            <person name="Suzuki H."/>
            <person name="Kawai J."/>
            <person name="Hayashizaki Y."/>
        </authorList>
    </citation>
    <scope>NUCLEOTIDE SEQUENCE [LARGE SCALE MRNA] (ISOFORM 1)</scope>
    <source>
        <strain>C57BL/6J</strain>
        <strain>NOD</strain>
        <tissue>Retina</tissue>
        <tissue>Thymus</tissue>
    </source>
</reference>
<reference key="4">
    <citation type="journal article" date="2007" name="J. Biol. Chem.">
        <title>The Src-like adaptor protein 2 regulates colony-stimulating factor-1 receptor signaling and down-regulation.</title>
        <authorList>
            <person name="Pakuts B."/>
            <person name="Debonneville C."/>
            <person name="Liontos L.M."/>
            <person name="Loreto M.P."/>
            <person name="McGlade C.J."/>
        </authorList>
    </citation>
    <scope>PHOSPHORYLATION</scope>
    <scope>INTERACTION WITH CBL AND CSF1R</scope>
</reference>
<organism>
    <name type="scientific">Mus musculus</name>
    <name type="common">Mouse</name>
    <dbReference type="NCBI Taxonomy" id="10090"/>
    <lineage>
        <taxon>Eukaryota</taxon>
        <taxon>Metazoa</taxon>
        <taxon>Chordata</taxon>
        <taxon>Craniata</taxon>
        <taxon>Vertebrata</taxon>
        <taxon>Euteleostomi</taxon>
        <taxon>Mammalia</taxon>
        <taxon>Eutheria</taxon>
        <taxon>Euarchontoglires</taxon>
        <taxon>Glires</taxon>
        <taxon>Rodentia</taxon>
        <taxon>Myomorpha</taxon>
        <taxon>Muroidea</taxon>
        <taxon>Muridae</taxon>
        <taxon>Murinae</taxon>
        <taxon>Mus</taxon>
        <taxon>Mus</taxon>
    </lineage>
</organism>
<proteinExistence type="evidence at protein level"/>
<dbReference type="EMBL" id="AF287467">
    <property type="protein sequence ID" value="AAL38196.1"/>
    <property type="molecule type" value="mRNA"/>
</dbReference>
<dbReference type="EMBL" id="AF434990">
    <property type="protein sequence ID" value="AAL86403.1"/>
    <property type="molecule type" value="mRNA"/>
</dbReference>
<dbReference type="EMBL" id="AK020837">
    <property type="protein sequence ID" value="BAB32223.1"/>
    <property type="status" value="ALT_INIT"/>
    <property type="molecule type" value="mRNA"/>
</dbReference>
<dbReference type="EMBL" id="AK030877">
    <property type="protein sequence ID" value="BAC27168.1"/>
    <property type="molecule type" value="mRNA"/>
</dbReference>
<dbReference type="EMBL" id="AK088672">
    <property type="protein sequence ID" value="BAC40495.1"/>
    <property type="molecule type" value="mRNA"/>
</dbReference>
<dbReference type="EMBL" id="AK138709">
    <property type="protein sequence ID" value="BAE23754.1"/>
    <property type="molecule type" value="mRNA"/>
</dbReference>
<dbReference type="CCDS" id="CCDS38302.1">
    <molecule id="Q8R4L0-1"/>
</dbReference>
<dbReference type="RefSeq" id="NP_001343424.1">
    <molecule id="Q8R4L0-1"/>
    <property type="nucleotide sequence ID" value="NM_001356495.1"/>
</dbReference>
<dbReference type="RefSeq" id="NP_084259.1">
    <molecule id="Q8R4L0-1"/>
    <property type="nucleotide sequence ID" value="NM_029983.6"/>
</dbReference>
<dbReference type="RefSeq" id="XP_006500468.1">
    <property type="nucleotide sequence ID" value="XM_006500405.2"/>
</dbReference>
<dbReference type="PDB" id="6XAR">
    <property type="method" value="X-ray"/>
    <property type="resolution" value="2.50 A"/>
    <property type="chains" value="C/D=237-255"/>
</dbReference>
<dbReference type="PDBsum" id="6XAR"/>
<dbReference type="SMR" id="Q8R4L0"/>
<dbReference type="BioGRID" id="218930">
    <property type="interactions" value="2"/>
</dbReference>
<dbReference type="FunCoup" id="Q8R4L0">
    <property type="interactions" value="543"/>
</dbReference>
<dbReference type="IntAct" id="Q8R4L0">
    <property type="interactions" value="1"/>
</dbReference>
<dbReference type="MINT" id="Q8R4L0"/>
<dbReference type="STRING" id="10090.ENSMUSP00000029164"/>
<dbReference type="iPTMnet" id="Q8R4L0"/>
<dbReference type="PhosphoSitePlus" id="Q8R4L0"/>
<dbReference type="jPOST" id="Q8R4L0"/>
<dbReference type="PaxDb" id="10090-ENSMUSP00000029164"/>
<dbReference type="ProteomicsDB" id="261073">
    <molecule id="Q8R4L0-1"/>
</dbReference>
<dbReference type="ProteomicsDB" id="261074">
    <molecule id="Q8R4L0-2"/>
</dbReference>
<dbReference type="Antibodypedia" id="26550">
    <property type="antibodies" value="453 antibodies from 23 providers"/>
</dbReference>
<dbReference type="Ensembl" id="ENSMUST00000029164.9">
    <molecule id="Q8R4L0-1"/>
    <property type="protein sequence ID" value="ENSMUSP00000029164.3"/>
    <property type="gene ID" value="ENSMUSG00000027636.12"/>
</dbReference>
<dbReference type="Ensembl" id="ENSMUST00000109561.4">
    <molecule id="Q8R4L0-1"/>
    <property type="protein sequence ID" value="ENSMUSP00000105189.4"/>
    <property type="gene ID" value="ENSMUSG00000027636.12"/>
</dbReference>
<dbReference type="GeneID" id="77799"/>
<dbReference type="KEGG" id="mmu:77799"/>
<dbReference type="UCSC" id="uc008nod.1">
    <molecule id="Q8R4L0-1"/>
    <property type="organism name" value="mouse"/>
</dbReference>
<dbReference type="AGR" id="MGI:1925049"/>
<dbReference type="CTD" id="84174"/>
<dbReference type="MGI" id="MGI:1925049">
    <property type="gene designation" value="Sla2"/>
</dbReference>
<dbReference type="VEuPathDB" id="HostDB:ENSMUSG00000027636"/>
<dbReference type="eggNOG" id="ENOG502QPJN">
    <property type="taxonomic scope" value="Eukaryota"/>
</dbReference>
<dbReference type="GeneTree" id="ENSGT00940000160331"/>
<dbReference type="HOGENOM" id="CLU_084503_1_0_1"/>
<dbReference type="InParanoid" id="Q8R4L0"/>
<dbReference type="OMA" id="QRAPLNW"/>
<dbReference type="OrthoDB" id="9924021at2759"/>
<dbReference type="PhylomeDB" id="Q8R4L0"/>
<dbReference type="TreeFam" id="TF354288"/>
<dbReference type="Reactome" id="R-MMU-9706369">
    <property type="pathway name" value="Negative regulation of FLT3"/>
</dbReference>
<dbReference type="BioGRID-ORCS" id="77799">
    <property type="hits" value="1 hit in 77 CRISPR screens"/>
</dbReference>
<dbReference type="PRO" id="PR:Q8R4L0"/>
<dbReference type="Proteomes" id="UP000000589">
    <property type="component" value="Chromosome 2"/>
</dbReference>
<dbReference type="RNAct" id="Q8R4L0">
    <property type="molecule type" value="protein"/>
</dbReference>
<dbReference type="Bgee" id="ENSMUSG00000027636">
    <property type="expression patterns" value="Expressed in thymus and 62 other cell types or tissues"/>
</dbReference>
<dbReference type="GO" id="GO:0031410">
    <property type="term" value="C:cytoplasmic vesicle"/>
    <property type="evidence" value="ECO:0000314"/>
    <property type="project" value="MGI"/>
</dbReference>
<dbReference type="GO" id="GO:0005794">
    <property type="term" value="C:Golgi apparatus"/>
    <property type="evidence" value="ECO:0007669"/>
    <property type="project" value="Ensembl"/>
</dbReference>
<dbReference type="GO" id="GO:0005770">
    <property type="term" value="C:late endosome"/>
    <property type="evidence" value="ECO:0000314"/>
    <property type="project" value="MGI"/>
</dbReference>
<dbReference type="GO" id="GO:0005654">
    <property type="term" value="C:nucleoplasm"/>
    <property type="evidence" value="ECO:0007669"/>
    <property type="project" value="Ensembl"/>
</dbReference>
<dbReference type="GO" id="GO:0005886">
    <property type="term" value="C:plasma membrane"/>
    <property type="evidence" value="ECO:0000314"/>
    <property type="project" value="MGI"/>
</dbReference>
<dbReference type="GO" id="GO:0035591">
    <property type="term" value="F:signaling adaptor activity"/>
    <property type="evidence" value="ECO:0000250"/>
    <property type="project" value="UniProtKB"/>
</dbReference>
<dbReference type="GO" id="GO:0002250">
    <property type="term" value="P:adaptive immune response"/>
    <property type="evidence" value="ECO:0007669"/>
    <property type="project" value="UniProtKB-KW"/>
</dbReference>
<dbReference type="GO" id="GO:0050849">
    <property type="term" value="P:negative regulation of calcium-mediated signaling"/>
    <property type="evidence" value="ECO:0007669"/>
    <property type="project" value="Ensembl"/>
</dbReference>
<dbReference type="GO" id="GO:0050860">
    <property type="term" value="P:negative regulation of T cell receptor signaling pathway"/>
    <property type="evidence" value="ECO:0007669"/>
    <property type="project" value="Ensembl"/>
</dbReference>
<dbReference type="GO" id="GO:0000122">
    <property type="term" value="P:negative regulation of transcription by RNA polymerase II"/>
    <property type="evidence" value="ECO:0000250"/>
    <property type="project" value="UniProtKB"/>
</dbReference>
<dbReference type="GO" id="GO:0042110">
    <property type="term" value="P:T cell activation"/>
    <property type="evidence" value="ECO:0000314"/>
    <property type="project" value="MGI"/>
</dbReference>
<dbReference type="CDD" id="cd10344">
    <property type="entry name" value="SH2_SLAP"/>
    <property type="match status" value="1"/>
</dbReference>
<dbReference type="FunFam" id="2.30.30.40:FF:000224">
    <property type="entry name" value="Src like adaptor 2"/>
    <property type="match status" value="1"/>
</dbReference>
<dbReference type="FunFam" id="3.30.505.10:FF:000064">
    <property type="entry name" value="src-like-adapter 2 isoform X2"/>
    <property type="match status" value="1"/>
</dbReference>
<dbReference type="Gene3D" id="3.30.505.10">
    <property type="entry name" value="SH2 domain"/>
    <property type="match status" value="1"/>
</dbReference>
<dbReference type="Gene3D" id="2.30.30.40">
    <property type="entry name" value="SH3 Domains"/>
    <property type="match status" value="1"/>
</dbReference>
<dbReference type="InterPro" id="IPR043539">
    <property type="entry name" value="Grb2-like"/>
</dbReference>
<dbReference type="InterPro" id="IPR000980">
    <property type="entry name" value="SH2"/>
</dbReference>
<dbReference type="InterPro" id="IPR036860">
    <property type="entry name" value="SH2_dom_sf"/>
</dbReference>
<dbReference type="InterPro" id="IPR036028">
    <property type="entry name" value="SH3-like_dom_sf"/>
</dbReference>
<dbReference type="InterPro" id="IPR001452">
    <property type="entry name" value="SH3_domain"/>
</dbReference>
<dbReference type="InterPro" id="IPR035052">
    <property type="entry name" value="SLAP_SH2"/>
</dbReference>
<dbReference type="PANTHER" id="PTHR46037">
    <property type="entry name" value="PROTEIN ENHANCER OF SEVENLESS 2B"/>
    <property type="match status" value="1"/>
</dbReference>
<dbReference type="Pfam" id="PF00017">
    <property type="entry name" value="SH2"/>
    <property type="match status" value="1"/>
</dbReference>
<dbReference type="PRINTS" id="PR00401">
    <property type="entry name" value="SH2DOMAIN"/>
</dbReference>
<dbReference type="SMART" id="SM00252">
    <property type="entry name" value="SH2"/>
    <property type="match status" value="1"/>
</dbReference>
<dbReference type="SMART" id="SM00326">
    <property type="entry name" value="SH3"/>
    <property type="match status" value="1"/>
</dbReference>
<dbReference type="SUPFAM" id="SSF55550">
    <property type="entry name" value="SH2 domain"/>
    <property type="match status" value="1"/>
</dbReference>
<dbReference type="SUPFAM" id="SSF50044">
    <property type="entry name" value="SH3-domain"/>
    <property type="match status" value="1"/>
</dbReference>
<dbReference type="PROSITE" id="PS50001">
    <property type="entry name" value="SH2"/>
    <property type="match status" value="1"/>
</dbReference>
<dbReference type="PROSITE" id="PS50002">
    <property type="entry name" value="SH3"/>
    <property type="match status" value="1"/>
</dbReference>
<protein>
    <recommendedName>
        <fullName>Src-like-adapter 2</fullName>
    </recommendedName>
    <alternativeName>
        <fullName>Src-like adapter protein 2</fullName>
        <shortName>SLAP-2</shortName>
    </alternativeName>
</protein>
<comment type="function">
    <text evidence="4 5">Adapter protein, which negatively regulates T-cell receptor (TCR) signaling. Inhibits T-cell antigen-receptor induced activation of nuclear factor of activated T-cells. May act by linking signaling proteins such as ZAP70 with CBL, leading to a CBL dependent degradation of signaling proteins.</text>
</comment>
<comment type="subunit">
    <text evidence="4 5 6">Interacts (via its C-terminal domain) with CBL (phosphorylated). Interacts (via SH2 domain) with ZAP70 (phosphorylated) and CD3Z (phosphorylated). Interacts (via SH2 domain) with CSF1R (phosphorylated).</text>
</comment>
<comment type="interaction">
    <interactant intactId="EBI-20766300">
        <id>Q8R4L0</id>
    </interactant>
    <interactant intactId="EBI-3946257">
        <id>P36888</id>
        <label>FLT3</label>
    </interactant>
    <organismsDiffer>true</organismsDiffer>
    <experiments>14</experiments>
</comment>
<comment type="subcellular location">
    <subcellularLocation>
        <location>Cytoplasm</location>
    </subcellularLocation>
    <subcellularLocation>
        <location>Cell membrane</location>
    </subcellularLocation>
    <subcellularLocation>
        <location>Cytoplasmic vesicle</location>
    </subcellularLocation>
    <subcellularLocation>
        <location>Late endosome</location>
    </subcellularLocation>
    <text>Localized to the plasma membrane and intracellular vesicles, including late endosomal vesicles.</text>
</comment>
<comment type="alternative products">
    <event type="alternative initiation"/>
    <isoform>
        <id>Q8R4L0-1</id>
        <name>1</name>
        <name>p28</name>
        <sequence type="displayed"/>
    </isoform>
    <isoform>
        <id>Q8R4L0-2</id>
        <name>2</name>
        <name>p25</name>
        <sequence type="described" ref="VSP_018795"/>
    </isoform>
</comment>
<comment type="tissue specificity">
    <text>Mainly expressed in immune system. Highly expressed in spleen and thymus and expressed at intermediate levels in lung. Not expressed in liver, heart and brain. Isoform 1 is predominant in lung and spleen, while isoform 2 is predominant in thymus.</text>
</comment>
<comment type="domain">
    <text>The loss of the C-terminal domain partially abolishes the inhibitory function.</text>
</comment>
<comment type="PTM">
    <text evidence="5 6">Phosphorylated by CSF1R.</text>
</comment>
<comment type="miscellaneous">
    <text>PubMed:12024036 confirmed the alternative initiation by mutating the Met in position 1 to Val, and showed that isoform 1 is abolished in favor of isoform 2.</text>
</comment>
<comment type="sequence caution" evidence="9">
    <conflict type="erroneous initiation">
        <sequence resource="EMBL-CDS" id="BAB32223"/>
    </conflict>
</comment>
<name>SLAP2_MOUSE</name>
<accession>Q8R4L0</accession>
<accession>Q3UU74</accession>
<accession>Q8C0K2</accession>
<accession>Q8VI42</accession>
<accession>Q9D1Z9</accession>
<feature type="initiator methionine" description="Removed">
    <location>
        <position position="1"/>
    </location>
</feature>
<feature type="chain" id="PRO_0000022353" description="Src-like-adapter 2">
    <location>
        <begin position="2"/>
        <end position="259"/>
    </location>
</feature>
<feature type="domain" description="SH3" evidence="2">
    <location>
        <begin position="31"/>
        <end position="91"/>
    </location>
</feature>
<feature type="domain" description="SH2" evidence="1">
    <location>
        <begin position="93"/>
        <end position="190"/>
    </location>
</feature>
<feature type="region of interest" description="Disordered" evidence="3">
    <location>
        <begin position="1"/>
        <end position="30"/>
    </location>
</feature>
<feature type="region of interest" description="SLA C-terminal">
    <location>
        <begin position="190"/>
        <end position="259"/>
    </location>
</feature>
<feature type="compositionally biased region" description="Low complexity" evidence="3">
    <location>
        <begin position="1"/>
        <end position="20"/>
    </location>
</feature>
<feature type="lipid moiety-binding region" description="N-myristoyl glycine" evidence="4 5">
    <location>
        <position position="2"/>
    </location>
</feature>
<feature type="splice variant" id="VSP_018795" description="In isoform 2." evidence="7 8">
    <location>
        <begin position="1"/>
        <end position="26"/>
    </location>
</feature>
<feature type="mutagenesis site" description="Abolishes localization to membranes." evidence="4 5">
    <original>G</original>
    <variation>A</variation>
    <location>
        <position position="2"/>
    </location>
</feature>
<feature type="mutagenesis site" description="Abolishes isoform 2." evidence="5">
    <original>M</original>
    <variation>V</variation>
    <location>
        <position position="27"/>
    </location>
</feature>
<feature type="mutagenesis site" description="Does not affect its inhibitory function." evidence="4">
    <original>P</original>
    <variation>L</variation>
    <location>
        <position position="82"/>
    </location>
</feature>
<feature type="mutagenesis site" description="Abolishes interaction with ZAP70, and its inhibitory function." evidence="4 5">
    <original>R</original>
    <variation>E</variation>
    <location>
        <position position="120"/>
    </location>
</feature>
<feature type="sequence conflict" description="In Ref. 3; BAC27168." evidence="9" ref="3">
    <original>C</original>
    <variation>Y</variation>
    <location>
        <position position="128"/>
    </location>
</feature>
<feature type="sequence conflict" description="In Ref. 3; BAC27168." evidence="9" ref="3">
    <original>S</original>
    <variation>T</variation>
    <location>
        <position position="160"/>
    </location>
</feature>
<feature type="sequence conflict" description="In Ref. 2; AAL86403." evidence="9" ref="2">
    <original>P</original>
    <variation>H</variation>
    <location>
        <position position="161"/>
    </location>
</feature>
<feature type="helix" evidence="10">
    <location>
        <begin position="241"/>
        <end position="251"/>
    </location>
</feature>
<sequence>MGSLSSRGKTSSPSPSSSGPDQEPVSMQPERHKVTAVALGSFPAGEQARLSLRLGEPLTIISEDGDWWTVQSEVSGREYHMPSVYVAKVAHGWLYEGLSREKAEELLLLPGNPGGAFLIRESQTRRGCYSLSVRLSRPASWDRIRHYRIQRLDNGWLYISPRLTFPSLHALVEHYSELADGICCPLREPCVLQKLGPLPGKDTPPPVTVPTSSLNWKKLDRSLLFLEAPASGEASLLSEGLRESLSSYISLAEDPLDDA</sequence>
<gene>
    <name type="primary">Sla2</name>
</gene>
<keyword id="KW-0002">3D-structure</keyword>
<keyword id="KW-1064">Adaptive immunity</keyword>
<keyword id="KW-0024">Alternative initiation</keyword>
<keyword id="KW-1003">Cell membrane</keyword>
<keyword id="KW-0963">Cytoplasm</keyword>
<keyword id="KW-0968">Cytoplasmic vesicle</keyword>
<keyword id="KW-0967">Endosome</keyword>
<keyword id="KW-0391">Immunity</keyword>
<keyword id="KW-0449">Lipoprotein</keyword>
<keyword id="KW-0472">Membrane</keyword>
<keyword id="KW-0519">Myristate</keyword>
<keyword id="KW-0597">Phosphoprotein</keyword>
<keyword id="KW-1185">Reference proteome</keyword>
<keyword id="KW-0727">SH2 domain</keyword>
<keyword id="KW-0728">SH3 domain</keyword>
<evidence type="ECO:0000255" key="1">
    <source>
        <dbReference type="PROSITE-ProRule" id="PRU00191"/>
    </source>
</evidence>
<evidence type="ECO:0000255" key="2">
    <source>
        <dbReference type="PROSITE-ProRule" id="PRU00192"/>
    </source>
</evidence>
<evidence type="ECO:0000256" key="3">
    <source>
        <dbReference type="SAM" id="MobiDB-lite"/>
    </source>
</evidence>
<evidence type="ECO:0000269" key="4">
    <source>
    </source>
</evidence>
<evidence type="ECO:0000269" key="5">
    <source>
    </source>
</evidence>
<evidence type="ECO:0000269" key="6">
    <source>
    </source>
</evidence>
<evidence type="ECO:0000303" key="7">
    <source>
    </source>
</evidence>
<evidence type="ECO:0000303" key="8">
    <source>
    </source>
</evidence>
<evidence type="ECO:0000305" key="9"/>
<evidence type="ECO:0007829" key="10">
    <source>
        <dbReference type="PDB" id="6XAR"/>
    </source>
</evidence>